<keyword id="KW-0002">3D-structure</keyword>
<keyword id="KW-0007">Acetylation</keyword>
<keyword id="KW-0053">Apoptosis</keyword>
<keyword id="KW-0963">Cytoplasm</keyword>
<keyword id="KW-0472">Membrane</keyword>
<keyword id="KW-0496">Mitochondrion</keyword>
<keyword id="KW-1000">Mitochondrion outer membrane</keyword>
<keyword id="KW-0597">Phosphoprotein</keyword>
<keyword id="KW-1185">Reference proteome</keyword>
<keyword id="KW-0832">Ubl conjugation</keyword>
<name>BID_MOUSE</name>
<protein>
    <recommendedName>
        <fullName>BH3-interacting domain death agonist</fullName>
    </recommendedName>
    <alternativeName>
        <fullName>p22 BID</fullName>
        <shortName>BID</shortName>
    </alternativeName>
    <component>
        <recommendedName>
            <fullName>BH3-interacting domain death agonist p15</fullName>
        </recommendedName>
        <alternativeName>
            <fullName>p15 BID</fullName>
        </alternativeName>
    </component>
    <component>
        <recommendedName>
            <fullName>BH3-interacting domain death agonist p13</fullName>
        </recommendedName>
        <alternativeName>
            <fullName>p13 BID</fullName>
        </alternativeName>
    </component>
    <component>
        <recommendedName>
            <fullName>BH3-interacting domain death agonist p11</fullName>
        </recommendedName>
        <alternativeName>
            <fullName>p11 BID</fullName>
        </alternativeName>
    </component>
</protein>
<proteinExistence type="evidence at protein level"/>
<gene>
    <name type="primary">Bid</name>
</gene>
<reference key="1">
    <citation type="journal article" date="1996" name="Genes Dev.">
        <title>BID: a novel BH3 domain-only death agonist.</title>
        <authorList>
            <person name="Wang K."/>
            <person name="Yin X.-M."/>
            <person name="Chao D.T."/>
            <person name="Milliman C.L."/>
            <person name="Korsmeyer S.J."/>
        </authorList>
    </citation>
    <scope>NUCLEOTIDE SEQUENCE [MRNA]</scope>
    <scope>MUTAGENESIS OF BH3 MOTIF</scope>
    <scope>SUBUNIT</scope>
    <source>
        <tissue>T-cell</tissue>
    </source>
</reference>
<reference key="2">
    <citation type="journal article" date="2005" name="Science">
        <title>The transcriptional landscape of the mammalian genome.</title>
        <authorList>
            <person name="Carninci P."/>
            <person name="Kasukawa T."/>
            <person name="Katayama S."/>
            <person name="Gough J."/>
            <person name="Frith M.C."/>
            <person name="Maeda N."/>
            <person name="Oyama R."/>
            <person name="Ravasi T."/>
            <person name="Lenhard B."/>
            <person name="Wells C."/>
            <person name="Kodzius R."/>
            <person name="Shimokawa K."/>
            <person name="Bajic V.B."/>
            <person name="Brenner S.E."/>
            <person name="Batalov S."/>
            <person name="Forrest A.R."/>
            <person name="Zavolan M."/>
            <person name="Davis M.J."/>
            <person name="Wilming L.G."/>
            <person name="Aidinis V."/>
            <person name="Allen J.E."/>
            <person name="Ambesi-Impiombato A."/>
            <person name="Apweiler R."/>
            <person name="Aturaliya R.N."/>
            <person name="Bailey T.L."/>
            <person name="Bansal M."/>
            <person name="Baxter L."/>
            <person name="Beisel K.W."/>
            <person name="Bersano T."/>
            <person name="Bono H."/>
            <person name="Chalk A.M."/>
            <person name="Chiu K.P."/>
            <person name="Choudhary V."/>
            <person name="Christoffels A."/>
            <person name="Clutterbuck D.R."/>
            <person name="Crowe M.L."/>
            <person name="Dalla E."/>
            <person name="Dalrymple B.P."/>
            <person name="de Bono B."/>
            <person name="Della Gatta G."/>
            <person name="di Bernardo D."/>
            <person name="Down T."/>
            <person name="Engstrom P."/>
            <person name="Fagiolini M."/>
            <person name="Faulkner G."/>
            <person name="Fletcher C.F."/>
            <person name="Fukushima T."/>
            <person name="Furuno M."/>
            <person name="Futaki S."/>
            <person name="Gariboldi M."/>
            <person name="Georgii-Hemming P."/>
            <person name="Gingeras T.R."/>
            <person name="Gojobori T."/>
            <person name="Green R.E."/>
            <person name="Gustincich S."/>
            <person name="Harbers M."/>
            <person name="Hayashi Y."/>
            <person name="Hensch T.K."/>
            <person name="Hirokawa N."/>
            <person name="Hill D."/>
            <person name="Huminiecki L."/>
            <person name="Iacono M."/>
            <person name="Ikeo K."/>
            <person name="Iwama A."/>
            <person name="Ishikawa T."/>
            <person name="Jakt M."/>
            <person name="Kanapin A."/>
            <person name="Katoh M."/>
            <person name="Kawasawa Y."/>
            <person name="Kelso J."/>
            <person name="Kitamura H."/>
            <person name="Kitano H."/>
            <person name="Kollias G."/>
            <person name="Krishnan S.P."/>
            <person name="Kruger A."/>
            <person name="Kummerfeld S.K."/>
            <person name="Kurochkin I.V."/>
            <person name="Lareau L.F."/>
            <person name="Lazarevic D."/>
            <person name="Lipovich L."/>
            <person name="Liu J."/>
            <person name="Liuni S."/>
            <person name="McWilliam S."/>
            <person name="Madan Babu M."/>
            <person name="Madera M."/>
            <person name="Marchionni L."/>
            <person name="Matsuda H."/>
            <person name="Matsuzawa S."/>
            <person name="Miki H."/>
            <person name="Mignone F."/>
            <person name="Miyake S."/>
            <person name="Morris K."/>
            <person name="Mottagui-Tabar S."/>
            <person name="Mulder N."/>
            <person name="Nakano N."/>
            <person name="Nakauchi H."/>
            <person name="Ng P."/>
            <person name="Nilsson R."/>
            <person name="Nishiguchi S."/>
            <person name="Nishikawa S."/>
            <person name="Nori F."/>
            <person name="Ohara O."/>
            <person name="Okazaki Y."/>
            <person name="Orlando V."/>
            <person name="Pang K.C."/>
            <person name="Pavan W.J."/>
            <person name="Pavesi G."/>
            <person name="Pesole G."/>
            <person name="Petrovsky N."/>
            <person name="Piazza S."/>
            <person name="Reed J."/>
            <person name="Reid J.F."/>
            <person name="Ring B.Z."/>
            <person name="Ringwald M."/>
            <person name="Rost B."/>
            <person name="Ruan Y."/>
            <person name="Salzberg S.L."/>
            <person name="Sandelin A."/>
            <person name="Schneider C."/>
            <person name="Schoenbach C."/>
            <person name="Sekiguchi K."/>
            <person name="Semple C.A."/>
            <person name="Seno S."/>
            <person name="Sessa L."/>
            <person name="Sheng Y."/>
            <person name="Shibata Y."/>
            <person name="Shimada H."/>
            <person name="Shimada K."/>
            <person name="Silva D."/>
            <person name="Sinclair B."/>
            <person name="Sperling S."/>
            <person name="Stupka E."/>
            <person name="Sugiura K."/>
            <person name="Sultana R."/>
            <person name="Takenaka Y."/>
            <person name="Taki K."/>
            <person name="Tammoja K."/>
            <person name="Tan S.L."/>
            <person name="Tang S."/>
            <person name="Taylor M.S."/>
            <person name="Tegner J."/>
            <person name="Teichmann S.A."/>
            <person name="Ueda H.R."/>
            <person name="van Nimwegen E."/>
            <person name="Verardo R."/>
            <person name="Wei C.L."/>
            <person name="Yagi K."/>
            <person name="Yamanishi H."/>
            <person name="Zabarovsky E."/>
            <person name="Zhu S."/>
            <person name="Zimmer A."/>
            <person name="Hide W."/>
            <person name="Bult C."/>
            <person name="Grimmond S.M."/>
            <person name="Teasdale R.D."/>
            <person name="Liu E.T."/>
            <person name="Brusic V."/>
            <person name="Quackenbush J."/>
            <person name="Wahlestedt C."/>
            <person name="Mattick J.S."/>
            <person name="Hume D.A."/>
            <person name="Kai C."/>
            <person name="Sasaki D."/>
            <person name="Tomaru Y."/>
            <person name="Fukuda S."/>
            <person name="Kanamori-Katayama M."/>
            <person name="Suzuki M."/>
            <person name="Aoki J."/>
            <person name="Arakawa T."/>
            <person name="Iida J."/>
            <person name="Imamura K."/>
            <person name="Itoh M."/>
            <person name="Kato T."/>
            <person name="Kawaji H."/>
            <person name="Kawagashira N."/>
            <person name="Kawashima T."/>
            <person name="Kojima M."/>
            <person name="Kondo S."/>
            <person name="Konno H."/>
            <person name="Nakano K."/>
            <person name="Ninomiya N."/>
            <person name="Nishio T."/>
            <person name="Okada M."/>
            <person name="Plessy C."/>
            <person name="Shibata K."/>
            <person name="Shiraki T."/>
            <person name="Suzuki S."/>
            <person name="Tagami M."/>
            <person name="Waki K."/>
            <person name="Watahiki A."/>
            <person name="Okamura-Oho Y."/>
            <person name="Suzuki H."/>
            <person name="Kawai J."/>
            <person name="Hayashizaki Y."/>
        </authorList>
    </citation>
    <scope>NUCLEOTIDE SEQUENCE [LARGE SCALE MRNA]</scope>
    <source>
        <strain>C57BL/6J</strain>
    </source>
</reference>
<reference key="3">
    <citation type="journal article" date="2004" name="Genome Res.">
        <title>The status, quality, and expansion of the NIH full-length cDNA project: the Mammalian Gene Collection (MGC).</title>
        <authorList>
            <consortium name="The MGC Project Team"/>
        </authorList>
    </citation>
    <scope>NUCLEOTIDE SEQUENCE [LARGE SCALE MRNA]</scope>
    <source>
        <tissue>Mammary gland</tissue>
    </source>
</reference>
<reference key="4">
    <citation type="journal article" date="1999" name="J. Biol. Chem.">
        <title>Caspase cleaved BID targets mitochondria and is required for cytochrome c release, while BCL-XL prevents this release but not tumor necrosis factor-R1/Fas death.</title>
        <authorList>
            <person name="Gross A."/>
            <person name="Yin X.-M."/>
            <person name="Wang K."/>
            <person name="Wei M.C."/>
            <person name="Jockel J."/>
            <person name="Milliman C."/>
            <person name="Erdjument-Bromage H."/>
            <person name="Tempst P."/>
            <person name="Korsmeyer S.J."/>
        </authorList>
    </citation>
    <scope>CLEAVAGE SITES</scope>
    <scope>SUBCELLULAR LOCATION</scope>
    <scope>MUTAGENESIS OF ASP-98</scope>
    <scope>FUNCTION</scope>
</reference>
<reference key="5">
    <citation type="journal article" date="2010" name="Cell">
        <title>A tissue-specific atlas of mouse protein phosphorylation and expression.</title>
        <authorList>
            <person name="Huttlin E.L."/>
            <person name="Jedrychowski M.P."/>
            <person name="Elias J.E."/>
            <person name="Goswami T."/>
            <person name="Rad R."/>
            <person name="Beausoleil S.A."/>
            <person name="Villen J."/>
            <person name="Haas W."/>
            <person name="Sowa M.E."/>
            <person name="Gygi S.P."/>
        </authorList>
    </citation>
    <scope>IDENTIFICATION BY MASS SPECTROMETRY [LARGE SCALE ANALYSIS]</scope>
    <source>
        <tissue>Brain</tissue>
        <tissue>Kidney</tissue>
        <tissue>Liver</tissue>
        <tissue>Lung</tissue>
        <tissue>Spleen</tissue>
        <tissue>Testis</tissue>
    </source>
</reference>
<reference key="6">
    <citation type="journal article" date="2010" name="FEBS J.">
        <title>The ubiquitin ligase Itch mediates the antiapoptotic activity of epidermal growth factor by promoting the ubiquitylation and degradation of the truncated C-terminal portion of Bid.</title>
        <authorList>
            <person name="Azakir B.A."/>
            <person name="Desrochers G."/>
            <person name="Angers A."/>
        </authorList>
    </citation>
    <scope>INTERACTION WITH ITCH</scope>
    <scope>UBIQUITINATION BY ITCH</scope>
</reference>
<reference key="7">
    <citation type="journal article" date="1999" name="Cell">
        <title>Solution structure of the proapoptotic molecule BID: a structural basis for apoptotic agonists and antagonists.</title>
        <authorList>
            <person name="McDonnell J.M."/>
            <person name="Fushman D."/>
            <person name="Milliman C.L."/>
            <person name="Korsmeyer S.J."/>
            <person name="Cowburn D."/>
        </authorList>
    </citation>
    <scope>STRUCTURE BY NMR</scope>
</reference>
<reference key="8">
    <citation type="journal article" date="2005" name="Mol. Cell. Biol.">
        <title>Mitochondrial carrier homolog 2 is a target of tBID in cells signaled to die by tumor necrosis factor alpha.</title>
        <authorList>
            <person name="Grinberg M."/>
            <person name="Schwarz M."/>
            <person name="Zaltsman Y."/>
            <person name="Eini T."/>
            <person name="Niv H."/>
            <person name="Pietrokovski S."/>
            <person name="Gross A."/>
        </authorList>
    </citation>
    <scope>INTERACTION WITH MTCH2</scope>
</reference>
<accession>P70444</accession>
<accession>Q99M39</accession>
<dbReference type="EMBL" id="U75506">
    <property type="protein sequence ID" value="AAC71064.1"/>
    <property type="molecule type" value="mRNA"/>
</dbReference>
<dbReference type="EMBL" id="AK045731">
    <property type="protein sequence ID" value="BAC32475.1"/>
    <property type="molecule type" value="mRNA"/>
</dbReference>
<dbReference type="EMBL" id="AK051076">
    <property type="protein sequence ID" value="BAC34518.1"/>
    <property type="molecule type" value="mRNA"/>
</dbReference>
<dbReference type="EMBL" id="AK052356">
    <property type="protein sequence ID" value="BAC34955.1"/>
    <property type="molecule type" value="mRNA"/>
</dbReference>
<dbReference type="EMBL" id="AK077657">
    <property type="protein sequence ID" value="BAC36932.1"/>
    <property type="molecule type" value="mRNA"/>
</dbReference>
<dbReference type="EMBL" id="AK161235">
    <property type="protein sequence ID" value="BAE36258.1"/>
    <property type="molecule type" value="mRNA"/>
</dbReference>
<dbReference type="EMBL" id="BC002031">
    <property type="protein sequence ID" value="AAH02031.1"/>
    <property type="molecule type" value="mRNA"/>
</dbReference>
<dbReference type="CCDS" id="CCDS20486.1"/>
<dbReference type="RefSeq" id="NP_031570.2">
    <property type="nucleotide sequence ID" value="NM_007544.3"/>
</dbReference>
<dbReference type="RefSeq" id="XP_006505472.1">
    <property type="nucleotide sequence ID" value="XM_006505409.4"/>
</dbReference>
<dbReference type="RefSeq" id="XP_006505473.1">
    <property type="nucleotide sequence ID" value="XM_006505410.4"/>
</dbReference>
<dbReference type="RefSeq" id="XP_006505474.1">
    <property type="nucleotide sequence ID" value="XM_006505411.5"/>
</dbReference>
<dbReference type="RefSeq" id="XP_036021660.1">
    <property type="nucleotide sequence ID" value="XM_036165767.1"/>
</dbReference>
<dbReference type="PDB" id="1DDB">
    <property type="method" value="NMR"/>
    <property type="chains" value="A=1-195"/>
</dbReference>
<dbReference type="PDB" id="2VOI">
    <property type="method" value="X-ray"/>
    <property type="resolution" value="2.10 A"/>
    <property type="chains" value="B=76-109"/>
</dbReference>
<dbReference type="PDBsum" id="1DDB"/>
<dbReference type="PDBsum" id="2VOI"/>
<dbReference type="SMR" id="P70444"/>
<dbReference type="BioGRID" id="198349">
    <property type="interactions" value="12"/>
</dbReference>
<dbReference type="ComplexPortal" id="CPX-2024">
    <property type="entry name" value="BID:BCL-2 complex"/>
</dbReference>
<dbReference type="ComplexPortal" id="CPX-2037">
    <property type="entry name" value="BID:BCL-XL complex"/>
</dbReference>
<dbReference type="CORUM" id="P70444"/>
<dbReference type="DIP" id="DIP-29808N"/>
<dbReference type="ELM" id="P70444"/>
<dbReference type="FunCoup" id="P70444">
    <property type="interactions" value="731"/>
</dbReference>
<dbReference type="IntAct" id="P70444">
    <property type="interactions" value="8"/>
</dbReference>
<dbReference type="MINT" id="P70444"/>
<dbReference type="STRING" id="10090.ENSMUSP00000004560"/>
<dbReference type="iPTMnet" id="P70444"/>
<dbReference type="PhosphoSitePlus" id="P70444"/>
<dbReference type="PaxDb" id="10090-ENSMUSP00000004560"/>
<dbReference type="PeptideAtlas" id="P70444"/>
<dbReference type="ProteomicsDB" id="273689"/>
<dbReference type="Pumba" id="P70444"/>
<dbReference type="Antibodypedia" id="263">
    <property type="antibodies" value="1322 antibodies from 50 providers"/>
</dbReference>
<dbReference type="DNASU" id="12122"/>
<dbReference type="Ensembl" id="ENSMUST00000004560.12">
    <property type="protein sequence ID" value="ENSMUSP00000004560.6"/>
    <property type="gene ID" value="ENSMUSG00000004446.13"/>
</dbReference>
<dbReference type="Ensembl" id="ENSMUST00000160684.8">
    <property type="protein sequence ID" value="ENSMUSP00000125731.2"/>
    <property type="gene ID" value="ENSMUSG00000004446.13"/>
</dbReference>
<dbReference type="GeneID" id="12122"/>
<dbReference type="KEGG" id="mmu:12122"/>
<dbReference type="UCSC" id="uc009dnv.1">
    <property type="organism name" value="mouse"/>
</dbReference>
<dbReference type="AGR" id="MGI:108093"/>
<dbReference type="CTD" id="637"/>
<dbReference type="MGI" id="MGI:108093">
    <property type="gene designation" value="Bid"/>
</dbReference>
<dbReference type="VEuPathDB" id="HostDB:ENSMUSG00000004446"/>
<dbReference type="eggNOG" id="ENOG502SAN7">
    <property type="taxonomic scope" value="Eukaryota"/>
</dbReference>
<dbReference type="GeneTree" id="ENSGT00390000002868"/>
<dbReference type="HOGENOM" id="CLU_090524_0_0_1"/>
<dbReference type="InParanoid" id="P70444"/>
<dbReference type="OMA" id="DMDHSIH"/>
<dbReference type="OrthoDB" id="9941774at2759"/>
<dbReference type="PhylomeDB" id="P70444"/>
<dbReference type="TreeFam" id="TF102047"/>
<dbReference type="Reactome" id="R-MMU-111447">
    <property type="pathway name" value="Activation of BAD and translocation to mitochondria"/>
</dbReference>
<dbReference type="Reactome" id="R-MMU-111452">
    <property type="pathway name" value="Activation and oligomerization of BAK protein"/>
</dbReference>
<dbReference type="Reactome" id="R-MMU-111453">
    <property type="pathway name" value="BH3-only proteins associate with and inactivate anti-apoptotic BCL-2 members"/>
</dbReference>
<dbReference type="Reactome" id="R-MMU-114294">
    <property type="pathway name" value="Activation, translocation and oligomerization of BAX"/>
</dbReference>
<dbReference type="Reactome" id="R-MMU-75108">
    <property type="pathway name" value="Activation, myristolyation of BID and translocation to mitochondria"/>
</dbReference>
<dbReference type="BioGRID-ORCS" id="12122">
    <property type="hits" value="1 hit in 78 CRISPR screens"/>
</dbReference>
<dbReference type="ChiTaRS" id="Bid">
    <property type="organism name" value="mouse"/>
</dbReference>
<dbReference type="EvolutionaryTrace" id="P70444"/>
<dbReference type="PRO" id="PR:P70444"/>
<dbReference type="Proteomes" id="UP000000589">
    <property type="component" value="Chromosome 6"/>
</dbReference>
<dbReference type="RNAct" id="P70444">
    <property type="molecule type" value="protein"/>
</dbReference>
<dbReference type="Bgee" id="ENSMUSG00000004446">
    <property type="expression patterns" value="Expressed in lumbar dorsal root ganglion and 217 other cell types or tissues"/>
</dbReference>
<dbReference type="ExpressionAtlas" id="P70444">
    <property type="expression patterns" value="baseline and differential"/>
</dbReference>
<dbReference type="GO" id="GO:0005737">
    <property type="term" value="C:cytoplasm"/>
    <property type="evidence" value="ECO:0000314"/>
    <property type="project" value="MGI"/>
</dbReference>
<dbReference type="GO" id="GO:0005829">
    <property type="term" value="C:cytosol"/>
    <property type="evidence" value="ECO:0000314"/>
    <property type="project" value="MGI"/>
</dbReference>
<dbReference type="GO" id="GO:0016020">
    <property type="term" value="C:membrane"/>
    <property type="evidence" value="ECO:0000314"/>
    <property type="project" value="MGI"/>
</dbReference>
<dbReference type="GO" id="GO:0031966">
    <property type="term" value="C:mitochondrial membrane"/>
    <property type="evidence" value="ECO:0000314"/>
    <property type="project" value="BHF-UCL"/>
</dbReference>
<dbReference type="GO" id="GO:0005741">
    <property type="term" value="C:mitochondrial outer membrane"/>
    <property type="evidence" value="ECO:0000250"/>
    <property type="project" value="UniProtKB"/>
</dbReference>
<dbReference type="GO" id="GO:0005739">
    <property type="term" value="C:mitochondrion"/>
    <property type="evidence" value="ECO:0000314"/>
    <property type="project" value="MGI"/>
</dbReference>
<dbReference type="GO" id="GO:0031625">
    <property type="term" value="F:ubiquitin protein ligase binding"/>
    <property type="evidence" value="ECO:0000353"/>
    <property type="project" value="UniProtKB"/>
</dbReference>
<dbReference type="GO" id="GO:0008637">
    <property type="term" value="P:apoptotic mitochondrial changes"/>
    <property type="evidence" value="ECO:0000314"/>
    <property type="project" value="MGI"/>
</dbReference>
<dbReference type="GO" id="GO:0090150">
    <property type="term" value="P:establishment of protein localization to membrane"/>
    <property type="evidence" value="ECO:0007669"/>
    <property type="project" value="Ensembl"/>
</dbReference>
<dbReference type="GO" id="GO:0097191">
    <property type="term" value="P:extrinsic apoptotic signaling pathway"/>
    <property type="evidence" value="ECO:0000315"/>
    <property type="project" value="MGI"/>
</dbReference>
<dbReference type="GO" id="GO:0097284">
    <property type="term" value="P:hepatocyte apoptotic process"/>
    <property type="evidence" value="ECO:0000316"/>
    <property type="project" value="MGI"/>
</dbReference>
<dbReference type="GO" id="GO:0042775">
    <property type="term" value="P:mitochondrial ATP synthesis coupled electron transport"/>
    <property type="evidence" value="ECO:0000315"/>
    <property type="project" value="MGI"/>
</dbReference>
<dbReference type="GO" id="GO:0097345">
    <property type="term" value="P:mitochondrial outer membrane permeabilization"/>
    <property type="evidence" value="ECO:0000316"/>
    <property type="project" value="MGI"/>
</dbReference>
<dbReference type="GO" id="GO:1902230">
    <property type="term" value="P:negative regulation of intrinsic apoptotic signaling pathway in response to DNA damage"/>
    <property type="evidence" value="ECO:0000315"/>
    <property type="project" value="MGI"/>
</dbReference>
<dbReference type="GO" id="GO:0043065">
    <property type="term" value="P:positive regulation of apoptotic process"/>
    <property type="evidence" value="ECO:0000314"/>
    <property type="project" value="MGI"/>
</dbReference>
<dbReference type="GO" id="GO:2001235">
    <property type="term" value="P:positive regulation of apoptotic signaling pathway"/>
    <property type="evidence" value="ECO:0000314"/>
    <property type="project" value="MGI"/>
</dbReference>
<dbReference type="GO" id="GO:2001238">
    <property type="term" value="P:positive regulation of extrinsic apoptotic signaling pathway"/>
    <property type="evidence" value="ECO:0007669"/>
    <property type="project" value="Ensembl"/>
</dbReference>
<dbReference type="GO" id="GO:2000271">
    <property type="term" value="P:positive regulation of fibroblast apoptotic process"/>
    <property type="evidence" value="ECO:0000314"/>
    <property type="project" value="MGI"/>
</dbReference>
<dbReference type="GO" id="GO:2001244">
    <property type="term" value="P:positive regulation of intrinsic apoptotic signaling pathway"/>
    <property type="evidence" value="ECO:0007669"/>
    <property type="project" value="Ensembl"/>
</dbReference>
<dbReference type="GO" id="GO:0010918">
    <property type="term" value="P:positive regulation of mitochondrial membrane potential"/>
    <property type="evidence" value="ECO:0000315"/>
    <property type="project" value="MGI"/>
</dbReference>
<dbReference type="GO" id="GO:0031334">
    <property type="term" value="P:positive regulation of protein-containing complex assembly"/>
    <property type="evidence" value="ECO:0000314"/>
    <property type="project" value="UniProtKB"/>
</dbReference>
<dbReference type="GO" id="GO:0090200">
    <property type="term" value="P:positive regulation of release of cytochrome c from mitochondria"/>
    <property type="evidence" value="ECO:0000316"/>
    <property type="project" value="BHF-UCL"/>
</dbReference>
<dbReference type="GO" id="GO:0006626">
    <property type="term" value="P:protein targeting to mitochondrion"/>
    <property type="evidence" value="ECO:0000315"/>
    <property type="project" value="MGI"/>
</dbReference>
<dbReference type="GO" id="GO:0065003">
    <property type="term" value="P:protein-containing complex assembly"/>
    <property type="evidence" value="ECO:0000314"/>
    <property type="project" value="BHF-UCL"/>
</dbReference>
<dbReference type="GO" id="GO:0042981">
    <property type="term" value="P:regulation of apoptotic process"/>
    <property type="evidence" value="ECO:0000316"/>
    <property type="project" value="MGI"/>
</dbReference>
<dbReference type="GO" id="GO:0050678">
    <property type="term" value="P:regulation of epithelial cell proliferation"/>
    <property type="evidence" value="ECO:0000315"/>
    <property type="project" value="MGI"/>
</dbReference>
<dbReference type="GO" id="GO:2000045">
    <property type="term" value="P:regulation of G1/S transition of mitotic cell cycle"/>
    <property type="evidence" value="ECO:0000315"/>
    <property type="project" value="MGI"/>
</dbReference>
<dbReference type="GO" id="GO:1902108">
    <property type="term" value="P:regulation of mitochondrial membrane permeability involved in apoptotic process"/>
    <property type="evidence" value="ECO:0000316"/>
    <property type="project" value="MGI"/>
</dbReference>
<dbReference type="GO" id="GO:0042129">
    <property type="term" value="P:regulation of T cell proliferation"/>
    <property type="evidence" value="ECO:0000315"/>
    <property type="project" value="MGI"/>
</dbReference>
<dbReference type="GO" id="GO:0001836">
    <property type="term" value="P:release of cytochrome c from mitochondria"/>
    <property type="evidence" value="ECO:0000314"/>
    <property type="project" value="MGI"/>
</dbReference>
<dbReference type="GO" id="GO:0042770">
    <property type="term" value="P:signal transduction in response to DNA damage"/>
    <property type="evidence" value="ECO:0000304"/>
    <property type="project" value="UniProtKB"/>
</dbReference>
<dbReference type="GO" id="GO:0097435">
    <property type="term" value="P:supramolecular fiber organization"/>
    <property type="evidence" value="ECO:0007669"/>
    <property type="project" value="Ensembl"/>
</dbReference>
<dbReference type="DisProt" id="DP01661"/>
<dbReference type="FunFam" id="1.10.437.10:FF:000010">
    <property type="entry name" value="BH3-interacting domain death agonist"/>
    <property type="match status" value="1"/>
</dbReference>
<dbReference type="Gene3D" id="1.10.437.10">
    <property type="entry name" value="Blc2-like"/>
    <property type="match status" value="1"/>
</dbReference>
<dbReference type="InterPro" id="IPR036834">
    <property type="entry name" value="Bcl-2-like_sf"/>
</dbReference>
<dbReference type="InterPro" id="IPR020728">
    <property type="entry name" value="Bcl2_BH3_motif_CS"/>
</dbReference>
<dbReference type="InterPro" id="IPR010479">
    <property type="entry name" value="BID"/>
</dbReference>
<dbReference type="PANTHER" id="PTHR35447">
    <property type="entry name" value="BH3-INTERACTING DOMAIN DEATH AGONIST"/>
    <property type="match status" value="1"/>
</dbReference>
<dbReference type="PANTHER" id="PTHR35447:SF1">
    <property type="entry name" value="BH3-INTERACTING DOMAIN DEATH AGONIST"/>
    <property type="match status" value="1"/>
</dbReference>
<dbReference type="Pfam" id="PF06393">
    <property type="entry name" value="BID"/>
    <property type="match status" value="1"/>
</dbReference>
<dbReference type="PIRSF" id="PIRSF038018">
    <property type="entry name" value="BID"/>
    <property type="match status" value="1"/>
</dbReference>
<dbReference type="SUPFAM" id="SSF56854">
    <property type="entry name" value="Bcl-2 inhibitors of programmed cell death"/>
    <property type="match status" value="1"/>
</dbReference>
<dbReference type="PROSITE" id="PS01259">
    <property type="entry name" value="BH3"/>
    <property type="match status" value="1"/>
</dbReference>
<comment type="function">
    <text evidence="7">Induces caspases and apoptosis. Counters the protective effect of BCL2.</text>
</comment>
<comment type="function">
    <molecule>BH3-interacting domain death agonist p15</molecule>
    <text evidence="1 7">Induces caspase activation and apoptosis (By similarity). Allows the release of cytochrome c (PubMed:9873064).</text>
</comment>
<comment type="subunit">
    <text evidence="1 5">Forms heterodimers either with the pro-apoptotic protein BAX or the anti-apoptotic protein BCL2 (PubMed:21183079). Interacts with PLEKHN1 (By similarity).</text>
</comment>
<comment type="subunit">
    <molecule>BH3-interacting domain death agonist p15</molecule>
    <text evidence="3 4">Interacts with ITCH (PubMed:20392206). Interacts with MTCH2 (PubMed:15899861).</text>
</comment>
<comment type="interaction">
    <interactant intactId="EBI-783400">
        <id>P70444</id>
    </interactant>
    <interactant intactId="EBI-707754">
        <id>Q07440</id>
        <label>Bcl2a1</label>
    </interactant>
    <organismsDiffer>false</organismsDiffer>
    <experiments>2</experiments>
</comment>
<comment type="interaction">
    <interactant intactId="EBI-783400">
        <id>P70444</id>
    </interactant>
    <interactant intactId="EBI-516580">
        <id>Q07812</id>
        <label>BAX</label>
    </interactant>
    <organismsDiffer>true</organismsDiffer>
    <experiments>2</experiments>
</comment>
<comment type="interaction">
    <interactant intactId="EBI-2128640">
        <id>PRO_0000223236</id>
    </interactant>
    <interactant intactId="EBI-516580">
        <id>Q07812</id>
        <label>BAX</label>
    </interactant>
    <organismsDiffer>true</organismsDiffer>
    <experiments>2</experiments>
</comment>
<comment type="subcellular location">
    <subcellularLocation>
        <location evidence="7">Cytoplasm</location>
    </subcellularLocation>
    <subcellularLocation>
        <location evidence="7">Mitochondrion membrane</location>
    </subcellularLocation>
    <subcellularLocation>
        <location evidence="1">Mitochondrion outer membrane</location>
    </subcellularLocation>
    <text evidence="7">When uncleaved, it is predominantly cytoplasmic.</text>
</comment>
<comment type="subcellular location">
    <molecule>BH3-interacting domain death agonist p15</molecule>
    <subcellularLocation>
        <location evidence="7">Mitochondrion membrane</location>
    </subcellularLocation>
    <text evidence="7">Translocates to mitochondria as an integral membrane protein.</text>
</comment>
<comment type="subcellular location">
    <molecule>BH3-interacting domain death agonist p13</molecule>
    <subcellularLocation>
        <location evidence="7">Mitochondrion membrane</location>
    </subcellularLocation>
    <text evidence="7">Associated with the mitochondrial membrane.</text>
</comment>
<comment type="domain">
    <text>Intact BH3 motif is required by BIK, BID, BAK, BAD and BAX for their pro-apoptotic activity and for their interaction with anti-apoptotic members of the Bcl-2 family. Apoptotic members of the Bcl-2 family.</text>
</comment>
<comment type="PTM">
    <molecule>BH3-interacting domain death agonist</molecule>
    <text evidence="1 7">TNF-alpha induces caspase-mediated cleavage into a major p15 and minor p13 and p11 products (PubMed:9873064). Cleaved by CASP6 into a major p15 and minor p13 products, leading to release of cytochrome c and subsequent nonalcoholic steatohepatitis (By similarity).</text>
</comment>
<comment type="PTM">
    <molecule>BH3-interacting domain death agonist p15</molecule>
    <text evidence="4">Ubiquitinated by ITCH; ubiquitination results in proteasome-dependent degradation.</text>
</comment>
<feature type="chain" id="PRO_0000143102" description="BH3-interacting domain death agonist">
    <location>
        <begin position="1"/>
        <end position="195"/>
    </location>
</feature>
<feature type="chain" id="PRO_0000223236" description="BH3-interacting domain death agonist p15">
    <location>
        <begin position="60"/>
        <end position="195"/>
    </location>
</feature>
<feature type="chain" id="PRO_0000223235" description="BH3-interacting domain death agonist p13">
    <location>
        <begin position="76"/>
        <end position="195"/>
    </location>
</feature>
<feature type="chain" id="PRO_0000223234" description="BH3-interacting domain death agonist p11">
    <location>
        <begin position="99"/>
        <end position="195"/>
    </location>
</feature>
<feature type="region of interest" description="Disordered" evidence="2">
    <location>
        <begin position="58"/>
        <end position="77"/>
    </location>
</feature>
<feature type="short sequence motif" description="BH3" evidence="6">
    <location>
        <begin position="87"/>
        <end position="100"/>
    </location>
</feature>
<feature type="compositionally biased region" description="Polar residues" evidence="2">
    <location>
        <begin position="58"/>
        <end position="69"/>
    </location>
</feature>
<feature type="site" description="Cleavage" evidence="7">
    <location>
        <begin position="59"/>
        <end position="60"/>
    </location>
</feature>
<feature type="site" description="Cleavage" evidence="7">
    <location>
        <begin position="75"/>
        <end position="76"/>
    </location>
</feature>
<feature type="site" description="Cleavage" evidence="7">
    <location>
        <begin position="98"/>
        <end position="99"/>
    </location>
</feature>
<feature type="modified residue" description="N-acetylmethionine" evidence="1">
    <location>
        <position position="1"/>
    </location>
</feature>
<feature type="modified residue" description="Phosphoserine" evidence="1">
    <location>
        <position position="78"/>
    </location>
</feature>
<feature type="mutagenesis site" description="Loss of proteolytical cleavage leading to the production of p11 BID." evidence="7">
    <original>D</original>
    <variation>A</variation>
    <location>
        <position position="98"/>
    </location>
</feature>
<feature type="sequence conflict" description="In Ref. 1; AAC71064." evidence="8" ref="1">
    <original>E</original>
    <variation>K</variation>
    <location>
        <position position="14"/>
    </location>
</feature>
<feature type="helix" evidence="9">
    <location>
        <begin position="15"/>
        <end position="27"/>
    </location>
</feature>
<feature type="strand" evidence="9">
    <location>
        <begin position="28"/>
        <end position="30"/>
    </location>
</feature>
<feature type="helix" evidence="9">
    <location>
        <begin position="32"/>
        <end position="39"/>
    </location>
</feature>
<feature type="helix" evidence="10">
    <location>
        <begin position="79"/>
        <end position="99"/>
    </location>
</feature>
<feature type="strand" evidence="9">
    <location>
        <begin position="103"/>
        <end position="105"/>
    </location>
</feature>
<feature type="helix" evidence="9">
    <location>
        <begin position="106"/>
        <end position="113"/>
    </location>
</feature>
<feature type="strand" evidence="9">
    <location>
        <begin position="116"/>
        <end position="122"/>
    </location>
</feature>
<feature type="helix" evidence="9">
    <location>
        <begin position="125"/>
        <end position="137"/>
    </location>
</feature>
<feature type="helix" evidence="9">
    <location>
        <begin position="142"/>
        <end position="162"/>
    </location>
</feature>
<feature type="helix" evidence="9">
    <location>
        <begin position="167"/>
        <end position="180"/>
    </location>
</feature>
<feature type="helix" evidence="9">
    <location>
        <begin position="185"/>
        <end position="192"/>
    </location>
</feature>
<evidence type="ECO:0000250" key="1">
    <source>
        <dbReference type="UniProtKB" id="P55957"/>
    </source>
</evidence>
<evidence type="ECO:0000256" key="2">
    <source>
        <dbReference type="SAM" id="MobiDB-lite"/>
    </source>
</evidence>
<evidence type="ECO:0000269" key="3">
    <source>
    </source>
</evidence>
<evidence type="ECO:0000269" key="4">
    <source>
    </source>
</evidence>
<evidence type="ECO:0000269" key="5">
    <source>
    </source>
</evidence>
<evidence type="ECO:0000269" key="6">
    <source>
    </source>
</evidence>
<evidence type="ECO:0000269" key="7">
    <source>
    </source>
</evidence>
<evidence type="ECO:0000305" key="8"/>
<evidence type="ECO:0007829" key="9">
    <source>
        <dbReference type="PDB" id="1DDB"/>
    </source>
</evidence>
<evidence type="ECO:0007829" key="10">
    <source>
        <dbReference type="PDB" id="2VOI"/>
    </source>
</evidence>
<sequence>MDSEVSNGSGLGAEHITDLLVFGFLQSSGCTRQELEVLGRELPVQAYWEADLEDELQTDGSQASRSFNQGRIEPDSESQEEIIHNIARHLAQIGDEMDHNIQPTLVRQLAAQFMNGSLSEEDKRNCLAKALDEVKTAFPRDMENDKAMLIMTMLLAKKVASHAPSLLRDVFHTTVNFINQNLFSYVRNLVRNEMD</sequence>
<organism>
    <name type="scientific">Mus musculus</name>
    <name type="common">Mouse</name>
    <dbReference type="NCBI Taxonomy" id="10090"/>
    <lineage>
        <taxon>Eukaryota</taxon>
        <taxon>Metazoa</taxon>
        <taxon>Chordata</taxon>
        <taxon>Craniata</taxon>
        <taxon>Vertebrata</taxon>
        <taxon>Euteleostomi</taxon>
        <taxon>Mammalia</taxon>
        <taxon>Eutheria</taxon>
        <taxon>Euarchontoglires</taxon>
        <taxon>Glires</taxon>
        <taxon>Rodentia</taxon>
        <taxon>Myomorpha</taxon>
        <taxon>Muroidea</taxon>
        <taxon>Muridae</taxon>
        <taxon>Murinae</taxon>
        <taxon>Mus</taxon>
        <taxon>Mus</taxon>
    </lineage>
</organism>